<dbReference type="EMBL" id="AF027707">
    <property type="protein sequence ID" value="AAC53582.1"/>
    <property type="molecule type" value="mRNA"/>
</dbReference>
<dbReference type="EMBL" id="BC030069">
    <property type="protein sequence ID" value="AAH30069.1"/>
    <property type="molecule type" value="mRNA"/>
</dbReference>
<dbReference type="CCDS" id="CCDS15193.1">
    <molecule id="O35425-1"/>
</dbReference>
<dbReference type="RefSeq" id="NP_058058.1">
    <molecule id="O35425-1"/>
    <property type="nucleotide sequence ID" value="NM_016778.3"/>
</dbReference>
<dbReference type="SMR" id="O35425"/>
<dbReference type="CORUM" id="O35425"/>
<dbReference type="FunCoup" id="O35425">
    <property type="interactions" value="378"/>
</dbReference>
<dbReference type="STRING" id="10090.ENSMUSP00000027499"/>
<dbReference type="iPTMnet" id="O35425"/>
<dbReference type="PhosphoSitePlus" id="O35425"/>
<dbReference type="PaxDb" id="10090-ENSMUSP00000027499"/>
<dbReference type="PeptideAtlas" id="O35425"/>
<dbReference type="ProteomicsDB" id="273623">
    <molecule id="O35425-1"/>
</dbReference>
<dbReference type="ProteomicsDB" id="273624">
    <molecule id="O35425-2"/>
</dbReference>
<dbReference type="Pumba" id="O35425"/>
<dbReference type="Antibodypedia" id="20324">
    <property type="antibodies" value="275 antibodies from 33 providers"/>
</dbReference>
<dbReference type="DNASU" id="51800"/>
<dbReference type="Ensembl" id="ENSMUST00000027499.13">
    <molecule id="O35425-1"/>
    <property type="protein sequence ID" value="ENSMUSP00000027499.7"/>
    <property type="gene ID" value="ENSMUSG00000026278.15"/>
</dbReference>
<dbReference type="Ensembl" id="ENSMUST00000201863.4">
    <molecule id="O35425-1"/>
    <property type="protein sequence ID" value="ENSMUSP00000144347.2"/>
    <property type="gene ID" value="ENSMUSG00000026278.15"/>
</dbReference>
<dbReference type="GeneID" id="51800"/>
<dbReference type="KEGG" id="mmu:51800"/>
<dbReference type="UCSC" id="uc007cee.1">
    <molecule id="O35425-1"/>
    <property type="organism name" value="mouse"/>
</dbReference>
<dbReference type="AGR" id="MGI:1858494"/>
<dbReference type="CTD" id="666"/>
<dbReference type="MGI" id="MGI:1858494">
    <property type="gene designation" value="Bok"/>
</dbReference>
<dbReference type="VEuPathDB" id="HostDB:ENSMUSG00000026278"/>
<dbReference type="eggNOG" id="KOG4728">
    <property type="taxonomic scope" value="Eukaryota"/>
</dbReference>
<dbReference type="GeneTree" id="ENSGT01130000278292"/>
<dbReference type="HOGENOM" id="CLU_114994_0_0_1"/>
<dbReference type="InParanoid" id="O35425"/>
<dbReference type="OMA" id="DMTKCVV"/>
<dbReference type="OrthoDB" id="5947850at2759"/>
<dbReference type="PhylomeDB" id="O35425"/>
<dbReference type="TreeFam" id="TF315834"/>
<dbReference type="BioGRID-ORCS" id="51800">
    <property type="hits" value="1 hit in 75 CRISPR screens"/>
</dbReference>
<dbReference type="ChiTaRS" id="Bok">
    <property type="organism name" value="mouse"/>
</dbReference>
<dbReference type="PRO" id="PR:O35425"/>
<dbReference type="Proteomes" id="UP000000589">
    <property type="component" value="Chromosome 1"/>
</dbReference>
<dbReference type="RNAct" id="O35425">
    <property type="molecule type" value="protein"/>
</dbReference>
<dbReference type="Bgee" id="ENSMUSG00000026278">
    <property type="expression patterns" value="Expressed in decidua and 248 other cell types or tissues"/>
</dbReference>
<dbReference type="ExpressionAtlas" id="O35425">
    <property type="expression patterns" value="baseline and differential"/>
</dbReference>
<dbReference type="GO" id="GO:0033106">
    <property type="term" value="C:cis-Golgi network membrane"/>
    <property type="evidence" value="ECO:0000314"/>
    <property type="project" value="UniProtKB"/>
</dbReference>
<dbReference type="GO" id="GO:0031901">
    <property type="term" value="C:early endosome membrane"/>
    <property type="evidence" value="ECO:0000314"/>
    <property type="project" value="UniProtKB"/>
</dbReference>
<dbReference type="GO" id="GO:0005789">
    <property type="term" value="C:endoplasmic reticulum membrane"/>
    <property type="evidence" value="ECO:0000314"/>
    <property type="project" value="UniProtKB"/>
</dbReference>
<dbReference type="GO" id="GO:0005743">
    <property type="term" value="C:mitochondrial inner membrane"/>
    <property type="evidence" value="ECO:0007669"/>
    <property type="project" value="UniProtKB-SubCell"/>
</dbReference>
<dbReference type="GO" id="GO:0031966">
    <property type="term" value="C:mitochondrial membrane"/>
    <property type="evidence" value="ECO:0000314"/>
    <property type="project" value="UniProtKB"/>
</dbReference>
<dbReference type="GO" id="GO:0005741">
    <property type="term" value="C:mitochondrial outer membrane"/>
    <property type="evidence" value="ECO:0007669"/>
    <property type="project" value="UniProtKB-SubCell"/>
</dbReference>
<dbReference type="GO" id="GO:0005640">
    <property type="term" value="C:nuclear outer membrane"/>
    <property type="evidence" value="ECO:0007669"/>
    <property type="project" value="UniProtKB-SubCell"/>
</dbReference>
<dbReference type="GO" id="GO:0005634">
    <property type="term" value="C:nucleus"/>
    <property type="evidence" value="ECO:0000250"/>
    <property type="project" value="UniProtKB"/>
</dbReference>
<dbReference type="GO" id="GO:0055038">
    <property type="term" value="C:recycling endosome membrane"/>
    <property type="evidence" value="ECO:0000314"/>
    <property type="project" value="UniProtKB"/>
</dbReference>
<dbReference type="GO" id="GO:0032588">
    <property type="term" value="C:trans-Golgi network membrane"/>
    <property type="evidence" value="ECO:0000314"/>
    <property type="project" value="UniProtKB"/>
</dbReference>
<dbReference type="GO" id="GO:0051400">
    <property type="term" value="F:BH domain binding"/>
    <property type="evidence" value="ECO:0007669"/>
    <property type="project" value="Ensembl"/>
</dbReference>
<dbReference type="GO" id="GO:0046982">
    <property type="term" value="F:protein heterodimerization activity"/>
    <property type="evidence" value="ECO:0000250"/>
    <property type="project" value="UniProtKB"/>
</dbReference>
<dbReference type="GO" id="GO:0042803">
    <property type="term" value="F:protein homodimerization activity"/>
    <property type="evidence" value="ECO:0000314"/>
    <property type="project" value="UniProtKB"/>
</dbReference>
<dbReference type="GO" id="GO:0044877">
    <property type="term" value="F:protein-containing complex binding"/>
    <property type="evidence" value="ECO:0007669"/>
    <property type="project" value="Ensembl"/>
</dbReference>
<dbReference type="GO" id="GO:0005102">
    <property type="term" value="F:signaling receptor binding"/>
    <property type="evidence" value="ECO:0000353"/>
    <property type="project" value="UniProtKB"/>
</dbReference>
<dbReference type="GO" id="GO:0031625">
    <property type="term" value="F:ubiquitin protein ligase binding"/>
    <property type="evidence" value="ECO:0000353"/>
    <property type="project" value="UniProtKB"/>
</dbReference>
<dbReference type="GO" id="GO:0006921">
    <property type="term" value="P:cellular component disassembly involved in execution phase of apoptosis"/>
    <property type="evidence" value="ECO:0000314"/>
    <property type="project" value="UniProtKB"/>
</dbReference>
<dbReference type="GO" id="GO:0072332">
    <property type="term" value="P:intrinsic apoptotic signaling pathway by p53 class mediator"/>
    <property type="evidence" value="ECO:0007669"/>
    <property type="project" value="Ensembl"/>
</dbReference>
<dbReference type="GO" id="GO:0008584">
    <property type="term" value="P:male gonad development"/>
    <property type="evidence" value="ECO:0007669"/>
    <property type="project" value="Ensembl"/>
</dbReference>
<dbReference type="GO" id="GO:0051902">
    <property type="term" value="P:negative regulation of mitochondrial depolarization"/>
    <property type="evidence" value="ECO:0000315"/>
    <property type="project" value="UniProtKB"/>
</dbReference>
<dbReference type="GO" id="GO:1901029">
    <property type="term" value="P:negative regulation of mitochondrial outer membrane permeabilization involved in apoptotic signaling pathway"/>
    <property type="evidence" value="ECO:0000315"/>
    <property type="project" value="UniProtKB"/>
</dbReference>
<dbReference type="GO" id="GO:0060546">
    <property type="term" value="P:negative regulation of necroptotic process"/>
    <property type="evidence" value="ECO:0000315"/>
    <property type="project" value="UniProtKB"/>
</dbReference>
<dbReference type="GO" id="GO:0043524">
    <property type="term" value="P:negative regulation of neuron apoptotic process"/>
    <property type="evidence" value="ECO:0000315"/>
    <property type="project" value="UniProtKB"/>
</dbReference>
<dbReference type="GO" id="GO:0051402">
    <property type="term" value="P:neuron apoptotic process"/>
    <property type="evidence" value="ECO:0000314"/>
    <property type="project" value="MGI"/>
</dbReference>
<dbReference type="GO" id="GO:0048709">
    <property type="term" value="P:oligodendrocyte differentiation"/>
    <property type="evidence" value="ECO:0007669"/>
    <property type="project" value="Ensembl"/>
</dbReference>
<dbReference type="GO" id="GO:1902237">
    <property type="term" value="P:positive regulation of endoplasmic reticulum stress-induced intrinsic apoptotic signaling pathway"/>
    <property type="evidence" value="ECO:0000314"/>
    <property type="project" value="UniProtKB"/>
</dbReference>
<dbReference type="GO" id="GO:1900119">
    <property type="term" value="P:positive regulation of execution phase of apoptosis"/>
    <property type="evidence" value="ECO:0000250"/>
    <property type="project" value="UniProtKB"/>
</dbReference>
<dbReference type="GO" id="GO:2001244">
    <property type="term" value="P:positive regulation of intrinsic apoptotic signaling pathway"/>
    <property type="evidence" value="ECO:0000314"/>
    <property type="project" value="UniProtKB"/>
</dbReference>
<dbReference type="GO" id="GO:1901030">
    <property type="term" value="P:positive regulation of mitochondrial outer membrane permeabilization involved in apoptotic signaling pathway"/>
    <property type="evidence" value="ECO:0000314"/>
    <property type="project" value="UniProtKB"/>
</dbReference>
<dbReference type="GO" id="GO:1903899">
    <property type="term" value="P:positive regulation of PERK-mediated unfolded protein response"/>
    <property type="evidence" value="ECO:0000315"/>
    <property type="project" value="UniProtKB"/>
</dbReference>
<dbReference type="GO" id="GO:0051259">
    <property type="term" value="P:protein complex oligomerization"/>
    <property type="evidence" value="ECO:0000314"/>
    <property type="project" value="UniProtKB"/>
</dbReference>
<dbReference type="GO" id="GO:0010506">
    <property type="term" value="P:regulation of autophagy"/>
    <property type="evidence" value="ECO:0007669"/>
    <property type="project" value="Ensembl"/>
</dbReference>
<dbReference type="GO" id="GO:1901382">
    <property type="term" value="P:regulation of chorionic trophoblast cell proliferation"/>
    <property type="evidence" value="ECO:0000250"/>
    <property type="project" value="UniProtKB"/>
</dbReference>
<dbReference type="GO" id="GO:0051480">
    <property type="term" value="P:regulation of cytosolic calcium ion concentration"/>
    <property type="evidence" value="ECO:0000315"/>
    <property type="project" value="UniProtKB"/>
</dbReference>
<dbReference type="GO" id="GO:1904708">
    <property type="term" value="P:regulation of granulosa cell apoptotic process"/>
    <property type="evidence" value="ECO:0000250"/>
    <property type="project" value="UniProtKB"/>
</dbReference>
<dbReference type="GO" id="GO:0001836">
    <property type="term" value="P:release of cytochrome c from mitochondria"/>
    <property type="evidence" value="ECO:0007669"/>
    <property type="project" value="Ensembl"/>
</dbReference>
<dbReference type="GO" id="GO:0072718">
    <property type="term" value="P:response to cisplatin"/>
    <property type="evidence" value="ECO:0007669"/>
    <property type="project" value="Ensembl"/>
</dbReference>
<dbReference type="CDD" id="cd06845">
    <property type="entry name" value="Bcl-2_like"/>
    <property type="match status" value="1"/>
</dbReference>
<dbReference type="FunFam" id="1.10.437.10:FF:000005">
    <property type="entry name" value="bcl-2-related ovarian killer protein"/>
    <property type="match status" value="1"/>
</dbReference>
<dbReference type="Gene3D" id="1.10.437.10">
    <property type="entry name" value="Blc2-like"/>
    <property type="match status" value="1"/>
</dbReference>
<dbReference type="InterPro" id="IPR036834">
    <property type="entry name" value="Bcl-2-like_sf"/>
</dbReference>
<dbReference type="InterPro" id="IPR046371">
    <property type="entry name" value="Bcl-2_BH1-3"/>
</dbReference>
<dbReference type="InterPro" id="IPR026298">
    <property type="entry name" value="Bcl-2_fam"/>
</dbReference>
<dbReference type="InterPro" id="IPR002475">
    <property type="entry name" value="Bcl2-like"/>
</dbReference>
<dbReference type="PANTHER" id="PTHR11256">
    <property type="entry name" value="BCL-2 RELATED"/>
    <property type="match status" value="1"/>
</dbReference>
<dbReference type="PANTHER" id="PTHR11256:SF48">
    <property type="entry name" value="BCL-2-RELATED OVARIAN KILLER PROTEIN"/>
    <property type="match status" value="1"/>
</dbReference>
<dbReference type="Pfam" id="PF00452">
    <property type="entry name" value="Bcl-2"/>
    <property type="match status" value="1"/>
</dbReference>
<dbReference type="PRINTS" id="PR01862">
    <property type="entry name" value="BCL2FAMILY"/>
</dbReference>
<dbReference type="SMART" id="SM00337">
    <property type="entry name" value="BCL"/>
    <property type="match status" value="1"/>
</dbReference>
<dbReference type="SUPFAM" id="SSF56854">
    <property type="entry name" value="Bcl-2 inhibitors of programmed cell death"/>
    <property type="match status" value="1"/>
</dbReference>
<dbReference type="PROSITE" id="PS50062">
    <property type="entry name" value="BCL2_FAMILY"/>
    <property type="match status" value="1"/>
</dbReference>
<protein>
    <recommendedName>
        <fullName evidence="2">Bcl-2-related ovarian killer protein</fullName>
    </recommendedName>
    <alternativeName>
        <fullName>Apoptosis activator Mtd</fullName>
    </alternativeName>
    <alternativeName>
        <fullName>Protein matador</fullName>
    </alternativeName>
</protein>
<name>BOK_MOUSE</name>
<organism>
    <name type="scientific">Mus musculus</name>
    <name type="common">Mouse</name>
    <dbReference type="NCBI Taxonomy" id="10090"/>
    <lineage>
        <taxon>Eukaryota</taxon>
        <taxon>Metazoa</taxon>
        <taxon>Chordata</taxon>
        <taxon>Craniata</taxon>
        <taxon>Vertebrata</taxon>
        <taxon>Euteleostomi</taxon>
        <taxon>Mammalia</taxon>
        <taxon>Eutheria</taxon>
        <taxon>Euarchontoglires</taxon>
        <taxon>Glires</taxon>
        <taxon>Rodentia</taxon>
        <taxon>Myomorpha</taxon>
        <taxon>Muroidea</taxon>
        <taxon>Muridae</taxon>
        <taxon>Murinae</taxon>
        <taxon>Mus</taxon>
        <taxon>Mus</taxon>
    </lineage>
</organism>
<gene>
    <name evidence="13" type="primary">Bok</name>
    <name evidence="11" type="synonym">Mtd</name>
</gene>
<accession>O35425</accession>
<proteinExistence type="evidence at protein level"/>
<comment type="function">
    <text evidence="2 4 6 7 9 10">Apoptosis regulator that functions through different apoptotic signaling pathways (PubMed:23429263, PubMed:26015568, PubMed:26949185, PubMed:27098698, PubMed:9535847). Plays a roles as pro-apoptotic protein that positively regulates intrinsic apoptotic process in a BAX- and BAK1-dependent manner or in a BAX- and BAK1-independent manner (PubMed:23429263, PubMed:26015568, PubMed:26949185). In response to endoplasmic reticulum stress promotes mitochondrial apoptosis through downstream BAX/BAK1 activation and positive regulation of PERK-mediated unfolded protein response (PubMed:26015568). Activates apoptosis independently of heterodimerization with survival-promoting BCL2 and BCL2L1 through induction of mitochondrial outer membrane permeabilization, in a BAX- and BAK1-independent manner, in response to inhibition of ERAD-proteasome degradation system, resulting in cytochrome c release (PubMed:26949185, PubMed:9535847). In response to DNA damage, mediates intrinsic apoptotic process in a TP53-dependent manner. Plays a role in granulosa cell apoptosis by CASP3 activation (By similarity). Plays a roles as anti-apoptotic protein during neuronal apoptotic process, by negatively regulating poly ADP-ribose polymerase-dependent cell death through regulation of neuronal calcium homeostasis and mitochondrial bioenergetics in response to NMDA excitation (PubMed:27098698). In addition to its role in apoptosis, may regulate trophoblast cell proliferation during the early stages of placental development, by acting on G1/S transition through regulation of CCNE1 expression. May also play a role as an inducer of autophagy by disrupting interaction between MCL1 and BECN1 (By similarity).</text>
</comment>
<comment type="subunit">
    <text evidence="1 2 4 5 7 8">Monomer; positively regulates apoptotic process. Homodimer (PubMed:23429263). Heterodimer (By similarity). Oligomer; promoted by apoptotic stimuli and BH3-only proteins; mediates constitutive activation (PubMed:26949185). Interacts (via BH4 domain) with ITPR1; enhances BOK expression and stabilization; limits apoptosis and prevents ubiquitination and then degradation; protects ITPR1 from proteolysis by CASP3 during apoptosis (PubMed:23884412, PubMed:27053113). Interacts with ITPR2 and ITPR3; binds most strongly to ITPR2, and barely to ITPR3; regulates their expression (PubMed:23884412). Interacts with XPO1; translocates to the cytoplasm (By similarity). Interacts with BNIP3; promotes oligomerization (By similarity).</text>
</comment>
<comment type="subcellular location">
    <subcellularLocation>
        <location evidence="4 7">Mitochondrion membrane</location>
        <topology evidence="7">Single-pass membrane protein</topology>
    </subcellularLocation>
    <subcellularLocation>
        <location evidence="4 7">Endoplasmic reticulum membrane</location>
        <topology evidence="7">Single-pass membrane protein</topology>
    </subcellularLocation>
    <subcellularLocation>
        <location evidence="2">Mitochondrion inner membrane</location>
    </subcellularLocation>
    <subcellularLocation>
        <location evidence="2">Cytoplasm</location>
    </subcellularLocation>
    <subcellularLocation>
        <location evidence="2">Nucleus</location>
    </subcellularLocation>
    <subcellularLocation>
        <location evidence="2">Mitochondrion</location>
    </subcellularLocation>
    <subcellularLocation>
        <location evidence="2">Endoplasmic reticulum</location>
    </subcellularLocation>
    <subcellularLocation>
        <location evidence="2">Mitochondrion outer membrane</location>
    </subcellularLocation>
    <subcellularLocation>
        <location evidence="4">Early endosome membrane</location>
    </subcellularLocation>
    <subcellularLocation>
        <location evidence="4">Recycling endosome membrane</location>
    </subcellularLocation>
    <subcellularLocation>
        <location evidence="4">Nucleus outer membrane</location>
    </subcellularLocation>
    <subcellularLocation>
        <location evidence="4">Golgi apparatus</location>
        <location evidence="4">cis-Golgi network membrane</location>
    </subcellularLocation>
    <subcellularLocation>
        <location evidence="4">Golgi apparatus</location>
        <location evidence="4">trans-Golgi network membrane</location>
    </subcellularLocation>
    <subcellularLocation>
        <location evidence="2">Membrane</location>
    </subcellularLocation>
    <text evidence="2 4 7">Nuclear and cytoplasmic compartments in the early stages of apoptosis and during apoptosis associates with mitochondria. In healthy cells, associates loosely with the membrane in a hit-and-run mode. The insertion and accumulation on membranes is enhanced through the activity of death signals, resulting in the integration of the membrane-bound protein into the membrane (By similarity). The transmembrane domain controls subcellular localization; constitutes a tail-anchor (PubMed:23429263, PubMed:26949185). Localizes in early and late endosome upon blocking of apoptosis (PubMed:23429263). Must localize to the mitochondria to induce mitochondrial outer membrane permeabilization and apoptosis (PubMed:26949185).</text>
</comment>
<comment type="alternative products">
    <event type="alternative initiation"/>
    <isoform>
        <id>O35425-1</id>
        <name>1</name>
        <sequence type="displayed"/>
    </isoform>
    <isoform>
        <id>O35425-2</id>
        <name>2</name>
        <sequence type="described" ref="VSP_058600"/>
    </isoform>
</comment>
<comment type="tissue specificity">
    <text evidence="4 9 10">Widely expressed (PubMed:23429263, PubMed:9535847). Highly expressed in brain, kidney, and spleen (PubMed:27098698).</text>
</comment>
<comment type="developmental stage">
    <text evidence="10">At 15.0 dpc, expressed in brain, liver, thymus, lung, intestinal epithelium and follicles of the whiskers.</text>
</comment>
<comment type="induction">
    <text evidence="7">Induced upon proteasome inhibition.</text>
</comment>
<comment type="domain">
    <text evidence="5 8">BH4 domain mediates interaction with ITPR1.</text>
</comment>
<comment type="PTM">
    <text evidence="5 7 8">Ubiquitinated by AMFR/gp78 E3 ubiquitin ligase complex; mediates degradation by ubiquitin-proteasome pathway in a VCP/p97-dependent manner; prevents from proapoptotic activity; promotes degradation of newly synthesized proteins that are not ITPR1 associated.</text>
</comment>
<comment type="disruption phenotype">
    <text evidence="6">Knockout Bok mice have a normal development.</text>
</comment>
<comment type="miscellaneous">
    <text>'Matador' means killer in Spanish.</text>
</comment>
<comment type="similarity">
    <text evidence="12">Belongs to the Bcl-2 family.</text>
</comment>
<keyword id="KW-0024">Alternative initiation</keyword>
<keyword id="KW-0053">Apoptosis</keyword>
<keyword id="KW-0963">Cytoplasm</keyword>
<keyword id="KW-0256">Endoplasmic reticulum</keyword>
<keyword id="KW-0967">Endosome</keyword>
<keyword id="KW-0333">Golgi apparatus</keyword>
<keyword id="KW-1017">Isopeptide bond</keyword>
<keyword id="KW-0472">Membrane</keyword>
<keyword id="KW-0496">Mitochondrion</keyword>
<keyword id="KW-0999">Mitochondrion inner membrane</keyword>
<keyword id="KW-1000">Mitochondrion outer membrane</keyword>
<keyword id="KW-0539">Nucleus</keyword>
<keyword id="KW-0597">Phosphoprotein</keyword>
<keyword id="KW-1185">Reference proteome</keyword>
<keyword id="KW-0812">Transmembrane</keyword>
<keyword id="KW-1133">Transmembrane helix</keyword>
<keyword id="KW-0832">Ubl conjugation</keyword>
<reference key="1">
    <citation type="journal article" date="1998" name="J. Biol. Chem.">
        <title>Mtd, a novel Bcl-2 family member activates apoptosis in the absence of heterodimerization with Bcl-2 and Bcl-XL.</title>
        <authorList>
            <person name="Inohara N."/>
            <person name="Ekhterae D."/>
            <person name="Garcia I."/>
            <person name="Carrio R."/>
            <person name="Merino J."/>
            <person name="Merry A."/>
            <person name="Chen S."/>
            <person name="Nunez G."/>
        </authorList>
    </citation>
    <scope>NUCLEOTIDE SEQUENCE [MRNA] (ISOFORM 1)</scope>
    <scope>DEVELOPMENTAL STAGE</scope>
    <scope>TISSUE SPECIFICITY</scope>
    <scope>MUTAGENESIS OF LEU-71; LEU-74 AND LEU-78</scope>
    <scope>FUNCTION</scope>
</reference>
<reference key="2">
    <citation type="journal article" date="2004" name="Genome Res.">
        <title>The status, quality, and expansion of the NIH full-length cDNA project: the Mammalian Gene Collection (MGC).</title>
        <authorList>
            <consortium name="The MGC Project Team"/>
        </authorList>
    </citation>
    <scope>NUCLEOTIDE SEQUENCE [LARGE SCALE MRNA] (ISOFORM 1)</scope>
    <source>
        <strain>Czech II</strain>
        <tissue>Lung</tissue>
    </source>
</reference>
<reference key="3">
    <citation type="journal article" date="2010" name="Cell">
        <title>A tissue-specific atlas of mouse protein phosphorylation and expression.</title>
        <authorList>
            <person name="Huttlin E.L."/>
            <person name="Jedrychowski M.P."/>
            <person name="Elias J.E."/>
            <person name="Goswami T."/>
            <person name="Rad R."/>
            <person name="Beausoleil S.A."/>
            <person name="Villen J."/>
            <person name="Haas W."/>
            <person name="Sowa M.E."/>
            <person name="Gygi S.P."/>
        </authorList>
    </citation>
    <scope>PHOSPHORYLATION [LARGE SCALE ANALYSIS] AT SER-7</scope>
    <scope>IDENTIFICATION BY MASS SPECTROMETRY [LARGE SCALE ANALYSIS]</scope>
    <source>
        <tissue>Brain</tissue>
        <tissue>Brown adipose tissue</tissue>
        <tissue>Heart</tissue>
        <tissue>Kidney</tissue>
        <tissue>Liver</tissue>
        <tissue>Lung</tissue>
        <tissue>Pancreas</tissue>
        <tissue>Spleen</tissue>
        <tissue>Testis</tissue>
    </source>
</reference>
<reference key="4">
    <citation type="journal article" date="2013" name="Cell Death Differ.">
        <title>Intracellular localization of the BCL-2 family member BOK and functional implications.</title>
        <authorList>
            <person name="Echeverry N."/>
            <person name="Bachmann D."/>
            <person name="Ke F."/>
            <person name="Strasser A."/>
            <person name="Simon H.U."/>
            <person name="Kaufmann T."/>
        </authorList>
    </citation>
    <scope>TISSUE SPECIFICITY</scope>
    <scope>FUNCTION</scope>
    <scope>SUBUNIT</scope>
    <scope>MUTAGENESIS OF ASP-76</scope>
    <scope>SUBCELLULAR LOCATION</scope>
</reference>
<reference key="5">
    <citation type="journal article" date="2013" name="J. Biol. Chem.">
        <title>The Bcl-2 protein family member Bok binds to the coupling domain of inositol 1,4,5-trisphosphate receptors and protects them from proteolytic cleavage.</title>
        <authorList>
            <person name="Schulman J.J."/>
            <person name="Wright F.A."/>
            <person name="Kaufmann T."/>
            <person name="Wojcikiewicz R.J."/>
        </authorList>
    </citation>
    <scope>INTERACTION WITH ITPR1; ITPR2 AND ITPR3</scope>
    <scope>UBIQUITINATION</scope>
    <scope>DOMAIN</scope>
    <scope>REGION</scope>
    <scope>MUTAGENESIS OF 34-LEU--TYR-38</scope>
</reference>
<reference key="6">
    <citation type="journal article" date="2015" name="Proc. Natl. Acad. Sci. U.S.A.">
        <title>BCL-2 family member BOK promotes apoptosis in response to endoplasmic reticulum stress.</title>
        <authorList>
            <person name="Carpio M.A."/>
            <person name="Michaud M."/>
            <person name="Zhou W."/>
            <person name="Fisher J.K."/>
            <person name="Walensky L.D."/>
            <person name="Katz S.G."/>
        </authorList>
    </citation>
    <scope>DISRUPTION PHENOTYPE</scope>
    <scope>FUNCTION</scope>
</reference>
<reference key="7">
    <citation type="journal article" date="2016" name="Cell">
        <title>BOK Is a Non-canonical BCL-2 Family Effector of Apoptosis Regulated by ER-Associated Degradation.</title>
        <authorList>
            <person name="Llambi F."/>
            <person name="Wang Y.M."/>
            <person name="Victor B."/>
            <person name="Yang M."/>
            <person name="Schneider D.M."/>
            <person name="Gingras S."/>
            <person name="Parsons M.J."/>
            <person name="Zheng J.H."/>
            <person name="Brown S.A."/>
            <person name="Pelletier S."/>
            <person name="Moldoveanu T."/>
            <person name="Chen T."/>
            <person name="Green D.R."/>
        </authorList>
    </citation>
    <scope>FUNCTION</scope>
    <scope>UBIQUITINATION AT LYS-25; LYS-32; LYS-160 AND LYS-177</scope>
    <scope>IDENTIFICATION BY MASS SPECTROMETRY</scope>
    <scope>MUTAGENESIS OF LYS-25; LYS-32; LYS-160 AND LYS-177</scope>
    <scope>SUBCELLULAR LOCATION</scope>
    <scope>SUBUNIT</scope>
    <scope>INDUCTION</scope>
</reference>
<reference key="8">
    <citation type="journal article" date="2016" name="J. Biol. Chem.">
        <title>The Stability and Expression Level of Bok Are Governed by Binding to Inositol 1,4,5-Trisphosphate Receptors.</title>
        <authorList>
            <person name="Schulman J.J."/>
            <person name="Wright F.A."/>
            <person name="Han X."/>
            <person name="Zluhan E.J."/>
            <person name="Szczesniak L.M."/>
            <person name="Wojcikiewicz R.J."/>
        </authorList>
    </citation>
    <scope>INTERACTION WITH ITPR1</scope>
    <scope>DOMAIN</scope>
    <scope>MUTAGENESIS OF LEU-34</scope>
    <scope>UBIQUITINATION</scope>
    <scope>ALTERNATIVE SPLICING (ISOFORM 1 AND 2)</scope>
</reference>
<reference key="9">
    <citation type="journal article" date="2016" name="J. Neurosci.">
        <title>Bok Is Not Pro-Apoptotic But Suppresses Poly ADP-Ribose Polymerase-Dependent Cell Death Pathways and Protects against Excitotoxic and Seizure-Induced Neuronal Injury.</title>
        <authorList>
            <person name="D'Orsi B."/>
            <person name="Engel T."/>
            <person name="Pfeiffer S."/>
            <person name="Nandi S."/>
            <person name="Kaufmann T."/>
            <person name="Henshall D.C."/>
            <person name="Prehn J.H."/>
        </authorList>
    </citation>
    <scope>TISSUE SPECIFICITY</scope>
    <scope>FUNCTION</scope>
</reference>
<sequence length="213" mass="23456">MEVLRRSSVFAAEIMDAFDRSPTDKELVAQAKALGREYVHARLLRAGLSWSAPERASPAPGGRLAEVCTVLLRLGDELEQIRPSVYRNVARQLHIPLQSEPVVTDAFLAVAGHIFSAGITWGKVVSLYSVAAGLAVDCVRQAQPAMVHALVDCLGEFVRKTLATWLRRRGGWTDVLKCVVSTDPGFRSHWLVATLCSFGRFLKAAFFLLLPER</sequence>
<evidence type="ECO:0000250" key="1">
    <source>
        <dbReference type="UniProtKB" id="Q792S6"/>
    </source>
</evidence>
<evidence type="ECO:0000250" key="2">
    <source>
        <dbReference type="UniProtKB" id="Q9UMX3"/>
    </source>
</evidence>
<evidence type="ECO:0000255" key="3"/>
<evidence type="ECO:0000269" key="4">
    <source>
    </source>
</evidence>
<evidence type="ECO:0000269" key="5">
    <source>
    </source>
</evidence>
<evidence type="ECO:0000269" key="6">
    <source>
    </source>
</evidence>
<evidence type="ECO:0000269" key="7">
    <source>
    </source>
</evidence>
<evidence type="ECO:0000269" key="8">
    <source>
    </source>
</evidence>
<evidence type="ECO:0000269" key="9">
    <source>
    </source>
</evidence>
<evidence type="ECO:0000269" key="10">
    <source>
    </source>
</evidence>
<evidence type="ECO:0000303" key="11">
    <source>
    </source>
</evidence>
<evidence type="ECO:0000305" key="12"/>
<evidence type="ECO:0000312" key="13">
    <source>
        <dbReference type="MGI" id="MGI:1858494"/>
    </source>
</evidence>
<evidence type="ECO:0007744" key="14">
    <source>
    </source>
</evidence>
<feature type="chain" id="PRO_0000143087" description="Bcl-2-related ovarian killer protein">
    <location>
        <begin position="1"/>
        <end position="213"/>
    </location>
</feature>
<feature type="transmembrane region" description="Helical" evidence="3">
    <location>
        <begin position="190"/>
        <end position="210"/>
    </location>
</feature>
<feature type="region of interest" description="Interactions with ITPR1" evidence="5">
    <location>
        <begin position="15"/>
        <end position="45"/>
    </location>
</feature>
<feature type="region of interest" description="Nuclear export signal" evidence="2">
    <location>
        <begin position="71"/>
        <end position="79"/>
    </location>
</feature>
<feature type="short sequence motif" description="BH4">
    <location>
        <begin position="32"/>
        <end position="44"/>
    </location>
</feature>
<feature type="short sequence motif" description="BH3">
    <location>
        <begin position="67"/>
        <end position="83"/>
    </location>
</feature>
<feature type="short sequence motif" description="BH1">
    <location>
        <begin position="113"/>
        <end position="132"/>
    </location>
</feature>
<feature type="short sequence motif" description="BH2">
    <location>
        <begin position="165"/>
        <end position="179"/>
    </location>
</feature>
<feature type="modified residue" description="Phosphoserine" evidence="14">
    <location>
        <position position="7"/>
    </location>
</feature>
<feature type="cross-link" description="Glycyl lysine isopeptide (Lys-Gly) (interchain with G-Cter in ubiquitin)" evidence="7">
    <location>
        <position position="25"/>
    </location>
</feature>
<feature type="cross-link" description="Glycyl lysine isopeptide (Lys-Gly) (interchain with G-Cter in ubiquitin)" evidence="7">
    <location>
        <position position="32"/>
    </location>
</feature>
<feature type="cross-link" description="Glycyl lysine isopeptide (Lys-Gly) (interchain with G-Cter in ubiquitin)" evidence="7">
    <location>
        <position position="160"/>
    </location>
</feature>
<feature type="cross-link" description="Glycyl lysine isopeptide (Lys-Gly) (interchain with G-Cter in ubiquitin)" evidence="7">
    <location>
        <position position="177"/>
    </location>
</feature>
<feature type="splice variant" id="VSP_058600" description="In isoform 2." evidence="8">
    <location>
        <begin position="1"/>
        <end position="14"/>
    </location>
</feature>
<feature type="mutagenesis site" description="Increases protein expression and stability; when associated with R-32, R-160 and R-177. Increases apoptosis; when associated with R-32, R-160 and R-177." evidence="7">
    <original>K</original>
    <variation>R</variation>
    <location>
        <position position="25"/>
    </location>
</feature>
<feature type="mutagenesis site" description="Increases protein expression and stability; when associated with R-25, R-160 and R-177. Increases apoptosis; when associated with R-25, R-160 and R-177." evidence="7">
    <original>K</original>
    <variation>R</variation>
    <location>
        <position position="32"/>
    </location>
</feature>
<feature type="mutagenesis site" description="Does not interact with ITPR1." evidence="5">
    <original>LGREY</original>
    <variation>AAAAA</variation>
    <location>
        <begin position="34"/>
        <end position="38"/>
    </location>
</feature>
<feature type="mutagenesis site" description="Does not interact with ITPR1. Triggers apoptosis." evidence="8">
    <original>L</original>
    <variation>G</variation>
    <location>
        <position position="34"/>
    </location>
</feature>
<feature type="mutagenesis site" description="No change in apoptosis induction; when associated with Q-74 and Q-78." evidence="10">
    <original>L</original>
    <variation>Q</variation>
    <location>
        <position position="71"/>
    </location>
</feature>
<feature type="mutagenesis site" description="No change in apoptosis induction; when associated with Q-71 and Q-78." evidence="10">
    <original>L</original>
    <variation>Q</variation>
    <location>
        <position position="74"/>
    </location>
</feature>
<feature type="mutagenesis site" description="Disrupts homodimerization. Positively regulates intrinsic apoptotic signaling pathway." evidence="4">
    <original>D</original>
    <variation>A</variation>
    <location>
        <position position="76"/>
    </location>
</feature>
<feature type="mutagenesis site" description="No change in apoptosis induction; when associated with Q-71 and Q-74." evidence="10">
    <original>L</original>
    <variation>Q</variation>
    <location>
        <position position="78"/>
    </location>
</feature>
<feature type="mutagenesis site" description="Increases protein expression and stability; when associated with R-25, R-32 and R-177. Increases apoptosis; when associated with R-25, R-32 and R-177." evidence="7">
    <original>K</original>
    <variation>R</variation>
    <location>
        <position position="160"/>
    </location>
</feature>
<feature type="mutagenesis site" description="Increases protein expression and stability; when associated with R-25, R-32 and R-160. Increases apoptosis; when associated with R-25, R-32 and R-160." evidence="7">
    <original>K</original>
    <variation>R</variation>
    <location>
        <position position="177"/>
    </location>
</feature>